<sequence>MSRPLTKVTQQGDRIAIVSGLRIPFAKQATSYHDIPAVDLGKSVVSELVTRSGLLPEKIDQLVFGQVVQMPEAPNIAREIVLGAGLSVSTDAYSVSRACATSFQAIANVAESIMAGTVNIGIAGGADSSSVLPIGVTKSLARTLVEMNKAKTLSQRLKLLSRLKFRDLLPVSPAVAEYSTGLRMGDTAEQMAKTYRISREDQDALAHRSHILAAKAWEQGLLVDEVMTAHFPPYREALLEDNNIRKNSVLTSYAKLRPAFDRKYGTVTAANSTPLTDGAAAVILMRESVAKALGTKPLGYLRSYAFSAIDVWQDMLLGPSYATPIALDRAGITLKDLTLIDMHEAFAAQTLANLKMFASDEFARNKLGRAQAIGEVDMDKFNVLGGSIAYGHPFAATGARMVTQVLNELRRRGGGLGLTTACAAGGLGTAMVLEVE</sequence>
<protein>
    <recommendedName>
        <fullName evidence="1">3-ketoacyl-CoA thiolase</fullName>
        <ecNumber evidence="1">2.3.1.16</ecNumber>
    </recommendedName>
    <alternativeName>
        <fullName evidence="1">ACSs</fullName>
    </alternativeName>
    <alternativeName>
        <fullName evidence="1">Acetyl-CoA acyltransferase</fullName>
    </alternativeName>
    <alternativeName>
        <fullName evidence="1">Acyl-CoA ligase</fullName>
    </alternativeName>
    <alternativeName>
        <fullName evidence="1">Beta-ketothiolase</fullName>
    </alternativeName>
    <alternativeName>
        <fullName evidence="1">Fatty acid oxidation complex subunit beta</fullName>
    </alternativeName>
</protein>
<name>FADI_PHOLL</name>
<dbReference type="EC" id="2.3.1.16" evidence="1"/>
<dbReference type="EMBL" id="BX571869">
    <property type="protein sequence ID" value="CAE15575.1"/>
    <property type="molecule type" value="Genomic_DNA"/>
</dbReference>
<dbReference type="RefSeq" id="WP_011147408.1">
    <property type="nucleotide sequence ID" value="NC_005126.1"/>
</dbReference>
<dbReference type="SMR" id="Q7N287"/>
<dbReference type="STRING" id="243265.plu3201"/>
<dbReference type="GeneID" id="48849461"/>
<dbReference type="KEGG" id="plu:plu3201"/>
<dbReference type="eggNOG" id="COG0183">
    <property type="taxonomic scope" value="Bacteria"/>
</dbReference>
<dbReference type="HOGENOM" id="CLU_031026_2_0_6"/>
<dbReference type="OrthoDB" id="8951704at2"/>
<dbReference type="UniPathway" id="UPA00659"/>
<dbReference type="Proteomes" id="UP000002514">
    <property type="component" value="Chromosome"/>
</dbReference>
<dbReference type="GO" id="GO:0005829">
    <property type="term" value="C:cytosol"/>
    <property type="evidence" value="ECO:0007669"/>
    <property type="project" value="TreeGrafter"/>
</dbReference>
<dbReference type="GO" id="GO:0003988">
    <property type="term" value="F:acetyl-CoA C-acyltransferase activity"/>
    <property type="evidence" value="ECO:0007669"/>
    <property type="project" value="UniProtKB-UniRule"/>
</dbReference>
<dbReference type="GO" id="GO:0006635">
    <property type="term" value="P:fatty acid beta-oxidation"/>
    <property type="evidence" value="ECO:0007669"/>
    <property type="project" value="UniProtKB-UniRule"/>
</dbReference>
<dbReference type="CDD" id="cd00751">
    <property type="entry name" value="thiolase"/>
    <property type="match status" value="1"/>
</dbReference>
<dbReference type="FunFam" id="3.40.47.10:FF:000011">
    <property type="entry name" value="3-ketoacyl-CoA thiolase"/>
    <property type="match status" value="1"/>
</dbReference>
<dbReference type="Gene3D" id="3.40.47.10">
    <property type="match status" value="1"/>
</dbReference>
<dbReference type="HAMAP" id="MF_01618">
    <property type="entry name" value="FadI"/>
    <property type="match status" value="1"/>
</dbReference>
<dbReference type="InterPro" id="IPR050521">
    <property type="entry name" value="3-ketoacyl-CoA_Thiolase"/>
</dbReference>
<dbReference type="InterPro" id="IPR012806">
    <property type="entry name" value="Ac-CoA_C-AcTrfase_FadI"/>
</dbReference>
<dbReference type="InterPro" id="IPR002155">
    <property type="entry name" value="Thiolase"/>
</dbReference>
<dbReference type="InterPro" id="IPR016039">
    <property type="entry name" value="Thiolase-like"/>
</dbReference>
<dbReference type="InterPro" id="IPR020615">
    <property type="entry name" value="Thiolase_acyl_enz_int_AS"/>
</dbReference>
<dbReference type="InterPro" id="IPR020610">
    <property type="entry name" value="Thiolase_AS"/>
</dbReference>
<dbReference type="InterPro" id="IPR020617">
    <property type="entry name" value="Thiolase_C"/>
</dbReference>
<dbReference type="InterPro" id="IPR020613">
    <property type="entry name" value="Thiolase_CS"/>
</dbReference>
<dbReference type="InterPro" id="IPR020616">
    <property type="entry name" value="Thiolase_N"/>
</dbReference>
<dbReference type="NCBIfam" id="TIGR01930">
    <property type="entry name" value="AcCoA-C-Actrans"/>
    <property type="match status" value="1"/>
</dbReference>
<dbReference type="NCBIfam" id="TIGR02446">
    <property type="entry name" value="FadI"/>
    <property type="match status" value="1"/>
</dbReference>
<dbReference type="NCBIfam" id="NF006516">
    <property type="entry name" value="PRK08963.1"/>
    <property type="match status" value="1"/>
</dbReference>
<dbReference type="PANTHER" id="PTHR42689">
    <property type="entry name" value="ACETYL-COA ACYLTRANSFERASE FADA2 (3-KETOACYL-COA THIOLASE) (BETA-KETOTHIOLASE)-RELATED"/>
    <property type="match status" value="1"/>
</dbReference>
<dbReference type="PANTHER" id="PTHR42689:SF1">
    <property type="entry name" value="ACETYL-COA ACYLTRANSFERASE FADA2 (3-KETOACYL-COA THIOLASE) (BETA-KETOTHIOLASE)-RELATED"/>
    <property type="match status" value="1"/>
</dbReference>
<dbReference type="Pfam" id="PF02803">
    <property type="entry name" value="Thiolase_C"/>
    <property type="match status" value="1"/>
</dbReference>
<dbReference type="Pfam" id="PF00108">
    <property type="entry name" value="Thiolase_N"/>
    <property type="match status" value="1"/>
</dbReference>
<dbReference type="PIRSF" id="PIRSF000429">
    <property type="entry name" value="Ac-CoA_Ac_transf"/>
    <property type="match status" value="1"/>
</dbReference>
<dbReference type="SUPFAM" id="SSF53901">
    <property type="entry name" value="Thiolase-like"/>
    <property type="match status" value="2"/>
</dbReference>
<dbReference type="PROSITE" id="PS00098">
    <property type="entry name" value="THIOLASE_1"/>
    <property type="match status" value="1"/>
</dbReference>
<dbReference type="PROSITE" id="PS00737">
    <property type="entry name" value="THIOLASE_2"/>
    <property type="match status" value="1"/>
</dbReference>
<dbReference type="PROSITE" id="PS00099">
    <property type="entry name" value="THIOLASE_3"/>
    <property type="match status" value="1"/>
</dbReference>
<proteinExistence type="inferred from homology"/>
<evidence type="ECO:0000255" key="1">
    <source>
        <dbReference type="HAMAP-Rule" id="MF_01618"/>
    </source>
</evidence>
<comment type="function">
    <text evidence="1">Catalyzes the final step of fatty acid oxidation in which acetyl-CoA is released and the CoA ester of a fatty acid two carbons shorter is formed.</text>
</comment>
<comment type="catalytic activity">
    <reaction evidence="1">
        <text>an acyl-CoA + acetyl-CoA = a 3-oxoacyl-CoA + CoA</text>
        <dbReference type="Rhea" id="RHEA:21564"/>
        <dbReference type="ChEBI" id="CHEBI:57287"/>
        <dbReference type="ChEBI" id="CHEBI:57288"/>
        <dbReference type="ChEBI" id="CHEBI:58342"/>
        <dbReference type="ChEBI" id="CHEBI:90726"/>
        <dbReference type="EC" id="2.3.1.16"/>
    </reaction>
</comment>
<comment type="pathway">
    <text evidence="1">Lipid metabolism; fatty acid beta-oxidation.</text>
</comment>
<comment type="subunit">
    <text evidence="1">Heterotetramer of two alpha chains (FadJ) and two beta chains (FadI).</text>
</comment>
<comment type="subcellular location">
    <subcellularLocation>
        <location evidence="1">Cytoplasm</location>
    </subcellularLocation>
</comment>
<comment type="similarity">
    <text evidence="1">Belongs to the thiolase-like superfamily. Thiolase family.</text>
</comment>
<feature type="chain" id="PRO_0000206442" description="3-ketoacyl-CoA thiolase">
    <location>
        <begin position="1"/>
        <end position="436"/>
    </location>
</feature>
<feature type="active site" description="Acyl-thioester intermediate" evidence="1">
    <location>
        <position position="99"/>
    </location>
</feature>
<feature type="active site" description="Proton acceptor" evidence="1">
    <location>
        <position position="392"/>
    </location>
</feature>
<feature type="active site" description="Proton acceptor" evidence="1">
    <location>
        <position position="422"/>
    </location>
</feature>
<gene>
    <name evidence="1" type="primary">fadI</name>
    <name type="ordered locus">plu3201</name>
</gene>
<organism>
    <name type="scientific">Photorhabdus laumondii subsp. laumondii (strain DSM 15139 / CIP 105565 / TT01)</name>
    <name type="common">Photorhabdus luminescens subsp. laumondii</name>
    <dbReference type="NCBI Taxonomy" id="243265"/>
    <lineage>
        <taxon>Bacteria</taxon>
        <taxon>Pseudomonadati</taxon>
        <taxon>Pseudomonadota</taxon>
        <taxon>Gammaproteobacteria</taxon>
        <taxon>Enterobacterales</taxon>
        <taxon>Morganellaceae</taxon>
        <taxon>Photorhabdus</taxon>
    </lineage>
</organism>
<accession>Q7N287</accession>
<keyword id="KW-0012">Acyltransferase</keyword>
<keyword id="KW-0963">Cytoplasm</keyword>
<keyword id="KW-0276">Fatty acid metabolism</keyword>
<keyword id="KW-0442">Lipid degradation</keyword>
<keyword id="KW-0443">Lipid metabolism</keyword>
<keyword id="KW-1185">Reference proteome</keyword>
<keyword id="KW-0808">Transferase</keyword>
<reference key="1">
    <citation type="journal article" date="2003" name="Nat. Biotechnol.">
        <title>The genome sequence of the entomopathogenic bacterium Photorhabdus luminescens.</title>
        <authorList>
            <person name="Duchaud E."/>
            <person name="Rusniok C."/>
            <person name="Frangeul L."/>
            <person name="Buchrieser C."/>
            <person name="Givaudan A."/>
            <person name="Taourit S."/>
            <person name="Bocs S."/>
            <person name="Boursaux-Eude C."/>
            <person name="Chandler M."/>
            <person name="Charles J.-F."/>
            <person name="Dassa E."/>
            <person name="Derose R."/>
            <person name="Derzelle S."/>
            <person name="Freyssinet G."/>
            <person name="Gaudriault S."/>
            <person name="Medigue C."/>
            <person name="Lanois A."/>
            <person name="Powell K."/>
            <person name="Siguier P."/>
            <person name="Vincent R."/>
            <person name="Wingate V."/>
            <person name="Zouine M."/>
            <person name="Glaser P."/>
            <person name="Boemare N."/>
            <person name="Danchin A."/>
            <person name="Kunst F."/>
        </authorList>
    </citation>
    <scope>NUCLEOTIDE SEQUENCE [LARGE SCALE GENOMIC DNA]</scope>
    <source>
        <strain>DSM 15139 / CIP 105565 / TT01</strain>
    </source>
</reference>